<evidence type="ECO:0000250" key="1"/>
<evidence type="ECO:0000255" key="2">
    <source>
        <dbReference type="HAMAP-Rule" id="MF_00138"/>
    </source>
</evidence>
<organism>
    <name type="scientific">Pseudomonas syringae pv. tomato (strain ATCC BAA-871 / DC3000)</name>
    <dbReference type="NCBI Taxonomy" id="223283"/>
    <lineage>
        <taxon>Bacteria</taxon>
        <taxon>Pseudomonadati</taxon>
        <taxon>Pseudomonadota</taxon>
        <taxon>Gammaproteobacteria</taxon>
        <taxon>Pseudomonadales</taxon>
        <taxon>Pseudomonadaceae</taxon>
        <taxon>Pseudomonas</taxon>
    </lineage>
</organism>
<proteinExistence type="inferred from homology"/>
<keyword id="KW-0067">ATP-binding</keyword>
<keyword id="KW-0436">Ligase</keyword>
<keyword id="KW-0460">Magnesium</keyword>
<keyword id="KW-0464">Manganese</keyword>
<keyword id="KW-0479">Metal-binding</keyword>
<keyword id="KW-0547">Nucleotide-binding</keyword>
<keyword id="KW-0658">Purine biosynthesis</keyword>
<keyword id="KW-1185">Reference proteome</keyword>
<accession>Q87VR8</accession>
<name>PUR2_PSESM</name>
<dbReference type="EC" id="6.3.4.13" evidence="2"/>
<dbReference type="EMBL" id="AE016853">
    <property type="protein sequence ID" value="AAO58296.1"/>
    <property type="molecule type" value="Genomic_DNA"/>
</dbReference>
<dbReference type="RefSeq" id="NP_794601.1">
    <property type="nucleotide sequence ID" value="NC_004578.1"/>
</dbReference>
<dbReference type="RefSeq" id="WP_011105210.1">
    <property type="nucleotide sequence ID" value="NC_004578.1"/>
</dbReference>
<dbReference type="SMR" id="Q87VR8"/>
<dbReference type="STRING" id="223283.PSPTO_4867"/>
<dbReference type="GeneID" id="1186550"/>
<dbReference type="KEGG" id="pst:PSPTO_4867"/>
<dbReference type="PATRIC" id="fig|223283.9.peg.4979"/>
<dbReference type="eggNOG" id="COG0151">
    <property type="taxonomic scope" value="Bacteria"/>
</dbReference>
<dbReference type="HOGENOM" id="CLU_027420_3_1_6"/>
<dbReference type="OrthoDB" id="9807240at2"/>
<dbReference type="PhylomeDB" id="Q87VR8"/>
<dbReference type="UniPathway" id="UPA00074">
    <property type="reaction ID" value="UER00125"/>
</dbReference>
<dbReference type="Proteomes" id="UP000002515">
    <property type="component" value="Chromosome"/>
</dbReference>
<dbReference type="GO" id="GO:0005524">
    <property type="term" value="F:ATP binding"/>
    <property type="evidence" value="ECO:0007669"/>
    <property type="project" value="UniProtKB-KW"/>
</dbReference>
<dbReference type="GO" id="GO:0046872">
    <property type="term" value="F:metal ion binding"/>
    <property type="evidence" value="ECO:0007669"/>
    <property type="project" value="UniProtKB-KW"/>
</dbReference>
<dbReference type="GO" id="GO:0004637">
    <property type="term" value="F:phosphoribosylamine-glycine ligase activity"/>
    <property type="evidence" value="ECO:0007669"/>
    <property type="project" value="UniProtKB-UniRule"/>
</dbReference>
<dbReference type="GO" id="GO:0006189">
    <property type="term" value="P:'de novo' IMP biosynthetic process"/>
    <property type="evidence" value="ECO:0007669"/>
    <property type="project" value="UniProtKB-UniRule"/>
</dbReference>
<dbReference type="GO" id="GO:0009113">
    <property type="term" value="P:purine nucleobase biosynthetic process"/>
    <property type="evidence" value="ECO:0007669"/>
    <property type="project" value="InterPro"/>
</dbReference>
<dbReference type="FunFam" id="3.30.470.20:FF:000031">
    <property type="entry name" value="Phosphoribosylamine--glycine ligase"/>
    <property type="match status" value="1"/>
</dbReference>
<dbReference type="FunFam" id="3.40.50.20:FF:000006">
    <property type="entry name" value="Phosphoribosylamine--glycine ligase, chloroplastic"/>
    <property type="match status" value="1"/>
</dbReference>
<dbReference type="FunFam" id="3.30.1490.20:FF:000006">
    <property type="entry name" value="phosphoribosylamine--glycine ligase, chloroplastic-like"/>
    <property type="match status" value="1"/>
</dbReference>
<dbReference type="FunFam" id="3.90.600.10:FF:000001">
    <property type="entry name" value="Trifunctional purine biosynthetic protein adenosine-3"/>
    <property type="match status" value="1"/>
</dbReference>
<dbReference type="Gene3D" id="3.40.50.20">
    <property type="match status" value="1"/>
</dbReference>
<dbReference type="Gene3D" id="3.30.1490.20">
    <property type="entry name" value="ATP-grasp fold, A domain"/>
    <property type="match status" value="1"/>
</dbReference>
<dbReference type="Gene3D" id="3.30.470.20">
    <property type="entry name" value="ATP-grasp fold, B domain"/>
    <property type="match status" value="1"/>
</dbReference>
<dbReference type="Gene3D" id="3.90.600.10">
    <property type="entry name" value="Phosphoribosylglycinamide synthetase, C-terminal domain"/>
    <property type="match status" value="1"/>
</dbReference>
<dbReference type="HAMAP" id="MF_00138">
    <property type="entry name" value="GARS"/>
    <property type="match status" value="1"/>
</dbReference>
<dbReference type="InterPro" id="IPR011761">
    <property type="entry name" value="ATP-grasp"/>
</dbReference>
<dbReference type="InterPro" id="IPR013815">
    <property type="entry name" value="ATP_grasp_subdomain_1"/>
</dbReference>
<dbReference type="InterPro" id="IPR016185">
    <property type="entry name" value="PreATP-grasp_dom_sf"/>
</dbReference>
<dbReference type="InterPro" id="IPR020561">
    <property type="entry name" value="PRibGlycinamid_synth_ATP-grasp"/>
</dbReference>
<dbReference type="InterPro" id="IPR000115">
    <property type="entry name" value="PRibGlycinamide_synth"/>
</dbReference>
<dbReference type="InterPro" id="IPR020560">
    <property type="entry name" value="PRibGlycinamide_synth_C-dom"/>
</dbReference>
<dbReference type="InterPro" id="IPR037123">
    <property type="entry name" value="PRibGlycinamide_synth_C_sf"/>
</dbReference>
<dbReference type="InterPro" id="IPR020559">
    <property type="entry name" value="PRibGlycinamide_synth_CS"/>
</dbReference>
<dbReference type="InterPro" id="IPR020562">
    <property type="entry name" value="PRibGlycinamide_synth_N"/>
</dbReference>
<dbReference type="InterPro" id="IPR011054">
    <property type="entry name" value="Rudment_hybrid_motif"/>
</dbReference>
<dbReference type="NCBIfam" id="TIGR00877">
    <property type="entry name" value="purD"/>
    <property type="match status" value="1"/>
</dbReference>
<dbReference type="PANTHER" id="PTHR43472">
    <property type="entry name" value="PHOSPHORIBOSYLAMINE--GLYCINE LIGASE"/>
    <property type="match status" value="1"/>
</dbReference>
<dbReference type="PANTHER" id="PTHR43472:SF1">
    <property type="entry name" value="PHOSPHORIBOSYLAMINE--GLYCINE LIGASE, CHLOROPLASTIC"/>
    <property type="match status" value="1"/>
</dbReference>
<dbReference type="Pfam" id="PF01071">
    <property type="entry name" value="GARS_A"/>
    <property type="match status" value="1"/>
</dbReference>
<dbReference type="Pfam" id="PF02843">
    <property type="entry name" value="GARS_C"/>
    <property type="match status" value="1"/>
</dbReference>
<dbReference type="Pfam" id="PF02844">
    <property type="entry name" value="GARS_N"/>
    <property type="match status" value="1"/>
</dbReference>
<dbReference type="SMART" id="SM01209">
    <property type="entry name" value="GARS_A"/>
    <property type="match status" value="1"/>
</dbReference>
<dbReference type="SMART" id="SM01210">
    <property type="entry name" value="GARS_C"/>
    <property type="match status" value="1"/>
</dbReference>
<dbReference type="SUPFAM" id="SSF56059">
    <property type="entry name" value="Glutathione synthetase ATP-binding domain-like"/>
    <property type="match status" value="1"/>
</dbReference>
<dbReference type="SUPFAM" id="SSF52440">
    <property type="entry name" value="PreATP-grasp domain"/>
    <property type="match status" value="1"/>
</dbReference>
<dbReference type="SUPFAM" id="SSF51246">
    <property type="entry name" value="Rudiment single hybrid motif"/>
    <property type="match status" value="1"/>
</dbReference>
<dbReference type="PROSITE" id="PS50975">
    <property type="entry name" value="ATP_GRASP"/>
    <property type="match status" value="1"/>
</dbReference>
<dbReference type="PROSITE" id="PS00184">
    <property type="entry name" value="GARS"/>
    <property type="match status" value="1"/>
</dbReference>
<gene>
    <name evidence="2" type="primary">purD</name>
    <name type="ordered locus">PSPTO_4867</name>
</gene>
<reference key="1">
    <citation type="journal article" date="2003" name="Proc. Natl. Acad. Sci. U.S.A.">
        <title>The complete genome sequence of the Arabidopsis and tomato pathogen Pseudomonas syringae pv. tomato DC3000.</title>
        <authorList>
            <person name="Buell C.R."/>
            <person name="Joardar V."/>
            <person name="Lindeberg M."/>
            <person name="Selengut J."/>
            <person name="Paulsen I.T."/>
            <person name="Gwinn M.L."/>
            <person name="Dodson R.J."/>
            <person name="DeBoy R.T."/>
            <person name="Durkin A.S."/>
            <person name="Kolonay J.F."/>
            <person name="Madupu R."/>
            <person name="Daugherty S.C."/>
            <person name="Brinkac L.M."/>
            <person name="Beanan M.J."/>
            <person name="Haft D.H."/>
            <person name="Nelson W.C."/>
            <person name="Davidsen T.M."/>
            <person name="Zafar N."/>
            <person name="Zhou L."/>
            <person name="Liu J."/>
            <person name="Yuan Q."/>
            <person name="Khouri H.M."/>
            <person name="Fedorova N.B."/>
            <person name="Tran B."/>
            <person name="Russell D."/>
            <person name="Berry K.J."/>
            <person name="Utterback T.R."/>
            <person name="Van Aken S.E."/>
            <person name="Feldblyum T.V."/>
            <person name="D'Ascenzo M."/>
            <person name="Deng W.-L."/>
            <person name="Ramos A.R."/>
            <person name="Alfano J.R."/>
            <person name="Cartinhour S."/>
            <person name="Chatterjee A.K."/>
            <person name="Delaney T.P."/>
            <person name="Lazarowitz S.G."/>
            <person name="Martin G.B."/>
            <person name="Schneider D.J."/>
            <person name="Tang X."/>
            <person name="Bender C.L."/>
            <person name="White O."/>
            <person name="Fraser C.M."/>
            <person name="Collmer A."/>
        </authorList>
    </citation>
    <scope>NUCLEOTIDE SEQUENCE [LARGE SCALE GENOMIC DNA]</scope>
    <source>
        <strain>ATCC BAA-871 / DC3000</strain>
    </source>
</reference>
<sequence>MNVLIIGSGGREHALAWKVAQDPRVQKVFVAPGNAGTAIEAKCENVAIDVLALEQLADFAENNVSLTIVGPEVPLVAGVVDLFRSRGLDCFGPTAGAAQLEGSKAFTKDFLARHKIPTADYQNFTEIEPALAYLREKGAPIVIKADGLAAGKGVIVAMTLTEAEDAVQDMLAGNAFGEAGSRVVIEEFLDGEEASFIVMVDGKNVLPMATSQDHKRVGDGDSGPNTGGMGAYSPAPVVTADVHQRVMDLVIWPTVRGMADEGNVYTGFLYAGLMIDKAGNPKVIEFNCRFGDPETQPVMLRLQSSLVLLIEAALAQALDKVEAQWDPRPSLGIVLAAGGYPGDYAKGAIIEGLDAAALLEGKIFHAGTTLQDDRVVTSGGRVLCATALGDSVGSAQKNAYALAAKVDWQGCFYRTDIGYRAIARERGEDQE</sequence>
<comment type="catalytic activity">
    <reaction evidence="2">
        <text>5-phospho-beta-D-ribosylamine + glycine + ATP = N(1)-(5-phospho-beta-D-ribosyl)glycinamide + ADP + phosphate + H(+)</text>
        <dbReference type="Rhea" id="RHEA:17453"/>
        <dbReference type="ChEBI" id="CHEBI:15378"/>
        <dbReference type="ChEBI" id="CHEBI:30616"/>
        <dbReference type="ChEBI" id="CHEBI:43474"/>
        <dbReference type="ChEBI" id="CHEBI:57305"/>
        <dbReference type="ChEBI" id="CHEBI:58681"/>
        <dbReference type="ChEBI" id="CHEBI:143788"/>
        <dbReference type="ChEBI" id="CHEBI:456216"/>
        <dbReference type="EC" id="6.3.4.13"/>
    </reaction>
</comment>
<comment type="cofactor">
    <cofactor evidence="1">
        <name>Mg(2+)</name>
        <dbReference type="ChEBI" id="CHEBI:18420"/>
    </cofactor>
    <cofactor evidence="1">
        <name>Mn(2+)</name>
        <dbReference type="ChEBI" id="CHEBI:29035"/>
    </cofactor>
    <text evidence="1">Binds 1 Mg(2+) or Mn(2+) ion per subunit.</text>
</comment>
<comment type="pathway">
    <text evidence="2">Purine metabolism; IMP biosynthesis via de novo pathway; N(1)-(5-phospho-D-ribosyl)glycinamide from 5-phospho-alpha-D-ribose 1-diphosphate: step 2/2.</text>
</comment>
<comment type="similarity">
    <text evidence="2">Belongs to the GARS family.</text>
</comment>
<feature type="chain" id="PRO_0000151471" description="Phosphoribosylamine--glycine ligase">
    <location>
        <begin position="1"/>
        <end position="431"/>
    </location>
</feature>
<feature type="domain" description="ATP-grasp" evidence="2">
    <location>
        <begin position="108"/>
        <end position="315"/>
    </location>
</feature>
<feature type="binding site" evidence="2">
    <location>
        <begin position="134"/>
        <end position="195"/>
    </location>
    <ligand>
        <name>ATP</name>
        <dbReference type="ChEBI" id="CHEBI:30616"/>
    </ligand>
</feature>
<feature type="binding site" evidence="2">
    <location>
        <position position="285"/>
    </location>
    <ligand>
        <name>Mg(2+)</name>
        <dbReference type="ChEBI" id="CHEBI:18420"/>
    </ligand>
</feature>
<feature type="binding site" evidence="2">
    <location>
        <position position="287"/>
    </location>
    <ligand>
        <name>Mg(2+)</name>
        <dbReference type="ChEBI" id="CHEBI:18420"/>
    </ligand>
</feature>
<protein>
    <recommendedName>
        <fullName evidence="2">Phosphoribosylamine--glycine ligase</fullName>
        <ecNumber evidence="2">6.3.4.13</ecNumber>
    </recommendedName>
    <alternativeName>
        <fullName evidence="2">GARS</fullName>
    </alternativeName>
    <alternativeName>
        <fullName evidence="2">Glycinamide ribonucleotide synthetase</fullName>
    </alternativeName>
    <alternativeName>
        <fullName evidence="2">Phosphoribosylglycinamide synthetase</fullName>
    </alternativeName>
</protein>